<name>RSMF_SALEP</name>
<gene>
    <name evidence="1" type="primary">rsmF</name>
    <name type="ordered locus">SEN1187</name>
</gene>
<sequence>MAQHAVYFPDAFLTQMREAMPSTLSFDEFISACQRPLRRSIRINTLKISVADFLALIAPYGWSLTPIPWCHEGFWIERDDEEALPLGSTAEHLSGLFYIQEASSMLPVAALFADDNHPQRVMDMAAAPGSKTTQIAARMGNRGAILANEFSASRVKVLHANISRCGIANTALTHFDGRVFGAALPEMFDAILLDAPCSGEGVVRKDPDALKNWSPESNLDIAATQRELLNSAFHALRPGGTLVYSTCTLNRQENEEVCLWLKETYADAVEFLPLGDLFPDADRALTPEGFLHVFPQIYDCEGFFVARLRKMSSLPAMPAPGYKVGAFPFTPLKGREALHVTQAANAVGLLWDENLHLWQREKEVWLFPAEIESLIGKVRFSRLGIKLAESHNKGYRWQHEATIALACPTHAHAFELSVQEAEEWYRGRDIYPQTPPAADDVLVTFQHQPLGLAKRIGARIKNSYPRELVRDGKLFTGNS</sequence>
<accession>B5R2S1</accession>
<evidence type="ECO:0000255" key="1">
    <source>
        <dbReference type="HAMAP-Rule" id="MF_01579"/>
    </source>
</evidence>
<protein>
    <recommendedName>
        <fullName evidence="1">Ribosomal RNA small subunit methyltransferase F</fullName>
        <ecNumber evidence="1">2.1.1.178</ecNumber>
    </recommendedName>
    <alternativeName>
        <fullName evidence="1">16S rRNA m5C1407 methyltransferase</fullName>
    </alternativeName>
    <alternativeName>
        <fullName evidence="1">rRNA (cytosine-C(5)-)-methyltransferase RsmF</fullName>
    </alternativeName>
</protein>
<dbReference type="EC" id="2.1.1.178" evidence="1"/>
<dbReference type="EMBL" id="AM933172">
    <property type="protein sequence ID" value="CAR32768.1"/>
    <property type="molecule type" value="Genomic_DNA"/>
</dbReference>
<dbReference type="RefSeq" id="WP_001531515.1">
    <property type="nucleotide sequence ID" value="NC_011294.1"/>
</dbReference>
<dbReference type="SMR" id="B5R2S1"/>
<dbReference type="KEGG" id="set:SEN1187"/>
<dbReference type="HOGENOM" id="CLU_005316_6_2_6"/>
<dbReference type="Proteomes" id="UP000000613">
    <property type="component" value="Chromosome"/>
</dbReference>
<dbReference type="GO" id="GO:0005737">
    <property type="term" value="C:cytoplasm"/>
    <property type="evidence" value="ECO:0007669"/>
    <property type="project" value="UniProtKB-SubCell"/>
</dbReference>
<dbReference type="GO" id="GO:0003723">
    <property type="term" value="F:RNA binding"/>
    <property type="evidence" value="ECO:0007669"/>
    <property type="project" value="UniProtKB-KW"/>
</dbReference>
<dbReference type="GO" id="GO:0009383">
    <property type="term" value="F:rRNA (cytosine-C5-)-methyltransferase activity"/>
    <property type="evidence" value="ECO:0007669"/>
    <property type="project" value="TreeGrafter"/>
</dbReference>
<dbReference type="GO" id="GO:0070475">
    <property type="term" value="P:rRNA base methylation"/>
    <property type="evidence" value="ECO:0007669"/>
    <property type="project" value="TreeGrafter"/>
</dbReference>
<dbReference type="FunFam" id="3.10.450.720:FF:000001">
    <property type="entry name" value="Ribosomal RNA small subunit methyltransferase F"/>
    <property type="match status" value="1"/>
</dbReference>
<dbReference type="FunFam" id="3.40.50.150:FF:000079">
    <property type="entry name" value="Ribosomal RNA small subunit methyltransferase F"/>
    <property type="match status" value="1"/>
</dbReference>
<dbReference type="Gene3D" id="3.10.450.720">
    <property type="match status" value="1"/>
</dbReference>
<dbReference type="Gene3D" id="3.40.50.150">
    <property type="entry name" value="Vaccinia Virus protein VP39"/>
    <property type="match status" value="1"/>
</dbReference>
<dbReference type="HAMAP" id="MF_01579">
    <property type="entry name" value="16SrRNA_methyltr_F"/>
    <property type="match status" value="1"/>
</dbReference>
<dbReference type="InterPro" id="IPR031341">
    <property type="entry name" value="Methyltr_RsmF_N"/>
</dbReference>
<dbReference type="InterPro" id="IPR049560">
    <property type="entry name" value="MeTrfase_RsmB-F_NOP2_cat"/>
</dbReference>
<dbReference type="InterPro" id="IPR001678">
    <property type="entry name" value="MeTrfase_RsmB-F_NOP2_dom"/>
</dbReference>
<dbReference type="InterPro" id="IPR027391">
    <property type="entry name" value="Nol1_Nop2_Fmu_2"/>
</dbReference>
<dbReference type="InterPro" id="IPR011023">
    <property type="entry name" value="Nop2p"/>
</dbReference>
<dbReference type="InterPro" id="IPR023267">
    <property type="entry name" value="RCMT"/>
</dbReference>
<dbReference type="InterPro" id="IPR023545">
    <property type="entry name" value="rRNA_ssu_MeTfrase_F"/>
</dbReference>
<dbReference type="InterPro" id="IPR018314">
    <property type="entry name" value="RsmB/NOL1/NOP2-like_CS"/>
</dbReference>
<dbReference type="InterPro" id="IPR029063">
    <property type="entry name" value="SAM-dependent_MTases_sf"/>
</dbReference>
<dbReference type="InterPro" id="IPR048457">
    <property type="entry name" value="YebU_pre-PUA_dom"/>
</dbReference>
<dbReference type="NCBIfam" id="TIGR00446">
    <property type="entry name" value="nop2p"/>
    <property type="match status" value="1"/>
</dbReference>
<dbReference type="NCBIfam" id="NF008898">
    <property type="entry name" value="PRK11933.1"/>
    <property type="match status" value="1"/>
</dbReference>
<dbReference type="PANTHER" id="PTHR22807:SF30">
    <property type="entry name" value="28S RRNA (CYTOSINE(4447)-C(5))-METHYLTRANSFERASE-RELATED"/>
    <property type="match status" value="1"/>
</dbReference>
<dbReference type="PANTHER" id="PTHR22807">
    <property type="entry name" value="NOP2 YEAST -RELATED NOL1/NOP2/FMU SUN DOMAIN-CONTAINING"/>
    <property type="match status" value="1"/>
</dbReference>
<dbReference type="Pfam" id="PF01189">
    <property type="entry name" value="Methyltr_RsmB-F"/>
    <property type="match status" value="1"/>
</dbReference>
<dbReference type="Pfam" id="PF17125">
    <property type="entry name" value="Methyltr_RsmF_N"/>
    <property type="match status" value="1"/>
</dbReference>
<dbReference type="Pfam" id="PF13636">
    <property type="entry name" value="Methyltranf_PUA"/>
    <property type="match status" value="1"/>
</dbReference>
<dbReference type="Pfam" id="PF21150">
    <property type="entry name" value="YebU_pre-PUA_dom"/>
    <property type="match status" value="1"/>
</dbReference>
<dbReference type="PRINTS" id="PR02008">
    <property type="entry name" value="RCMTFAMILY"/>
</dbReference>
<dbReference type="SUPFAM" id="SSF53335">
    <property type="entry name" value="S-adenosyl-L-methionine-dependent methyltransferases"/>
    <property type="match status" value="1"/>
</dbReference>
<dbReference type="PROSITE" id="PS01153">
    <property type="entry name" value="NOL1_NOP2_SUN"/>
    <property type="match status" value="1"/>
</dbReference>
<dbReference type="PROSITE" id="PS51686">
    <property type="entry name" value="SAM_MT_RSMB_NOP"/>
    <property type="match status" value="1"/>
</dbReference>
<keyword id="KW-0963">Cytoplasm</keyword>
<keyword id="KW-0489">Methyltransferase</keyword>
<keyword id="KW-0694">RNA-binding</keyword>
<keyword id="KW-0698">rRNA processing</keyword>
<keyword id="KW-0949">S-adenosyl-L-methionine</keyword>
<keyword id="KW-0808">Transferase</keyword>
<reference key="1">
    <citation type="journal article" date="2008" name="Genome Res.">
        <title>Comparative genome analysis of Salmonella enteritidis PT4 and Salmonella gallinarum 287/91 provides insights into evolutionary and host adaptation pathways.</title>
        <authorList>
            <person name="Thomson N.R."/>
            <person name="Clayton D.J."/>
            <person name="Windhorst D."/>
            <person name="Vernikos G."/>
            <person name="Davidson S."/>
            <person name="Churcher C."/>
            <person name="Quail M.A."/>
            <person name="Stevens M."/>
            <person name="Jones M.A."/>
            <person name="Watson M."/>
            <person name="Barron A."/>
            <person name="Layton A."/>
            <person name="Pickard D."/>
            <person name="Kingsley R.A."/>
            <person name="Bignell A."/>
            <person name="Clark L."/>
            <person name="Harris B."/>
            <person name="Ormond D."/>
            <person name="Abdellah Z."/>
            <person name="Brooks K."/>
            <person name="Cherevach I."/>
            <person name="Chillingworth T."/>
            <person name="Woodward J."/>
            <person name="Norberczak H."/>
            <person name="Lord A."/>
            <person name="Arrowsmith C."/>
            <person name="Jagels K."/>
            <person name="Moule S."/>
            <person name="Mungall K."/>
            <person name="Saunders M."/>
            <person name="Whitehead S."/>
            <person name="Chabalgoity J.A."/>
            <person name="Maskell D."/>
            <person name="Humphreys T."/>
            <person name="Roberts M."/>
            <person name="Barrow P.A."/>
            <person name="Dougan G."/>
            <person name="Parkhill J."/>
        </authorList>
    </citation>
    <scope>NUCLEOTIDE SEQUENCE [LARGE SCALE GENOMIC DNA]</scope>
    <source>
        <strain>P125109</strain>
    </source>
</reference>
<feature type="chain" id="PRO_1000147574" description="Ribosomal RNA small subunit methyltransferase F">
    <location>
        <begin position="1"/>
        <end position="479"/>
    </location>
</feature>
<feature type="active site" description="Nucleophile" evidence="1">
    <location>
        <position position="247"/>
    </location>
</feature>
<feature type="binding site" evidence="1">
    <location>
        <begin position="125"/>
        <end position="131"/>
    </location>
    <ligand>
        <name>S-adenosyl-L-methionine</name>
        <dbReference type="ChEBI" id="CHEBI:59789"/>
    </ligand>
</feature>
<feature type="binding site" evidence="1">
    <location>
        <position position="149"/>
    </location>
    <ligand>
        <name>S-adenosyl-L-methionine</name>
        <dbReference type="ChEBI" id="CHEBI:59789"/>
    </ligand>
</feature>
<feature type="binding site" evidence="1">
    <location>
        <position position="176"/>
    </location>
    <ligand>
        <name>S-adenosyl-L-methionine</name>
        <dbReference type="ChEBI" id="CHEBI:59789"/>
    </ligand>
</feature>
<feature type="binding site" evidence="1">
    <location>
        <position position="194"/>
    </location>
    <ligand>
        <name>S-adenosyl-L-methionine</name>
        <dbReference type="ChEBI" id="CHEBI:59789"/>
    </ligand>
</feature>
<organism>
    <name type="scientific">Salmonella enteritidis PT4 (strain P125109)</name>
    <dbReference type="NCBI Taxonomy" id="550537"/>
    <lineage>
        <taxon>Bacteria</taxon>
        <taxon>Pseudomonadati</taxon>
        <taxon>Pseudomonadota</taxon>
        <taxon>Gammaproteobacteria</taxon>
        <taxon>Enterobacterales</taxon>
        <taxon>Enterobacteriaceae</taxon>
        <taxon>Salmonella</taxon>
    </lineage>
</organism>
<proteinExistence type="inferred from homology"/>
<comment type="function">
    <text evidence="1">Specifically methylates the cytosine at position 1407 (m5C1407) of 16S rRNA.</text>
</comment>
<comment type="catalytic activity">
    <reaction evidence="1">
        <text>cytidine(1407) in 16S rRNA + S-adenosyl-L-methionine = 5-methylcytidine(1407) in 16S rRNA + S-adenosyl-L-homocysteine + H(+)</text>
        <dbReference type="Rhea" id="RHEA:42756"/>
        <dbReference type="Rhea" id="RHEA-COMP:10223"/>
        <dbReference type="Rhea" id="RHEA-COMP:10224"/>
        <dbReference type="ChEBI" id="CHEBI:15378"/>
        <dbReference type="ChEBI" id="CHEBI:57856"/>
        <dbReference type="ChEBI" id="CHEBI:59789"/>
        <dbReference type="ChEBI" id="CHEBI:74483"/>
        <dbReference type="ChEBI" id="CHEBI:82748"/>
        <dbReference type="EC" id="2.1.1.178"/>
    </reaction>
</comment>
<comment type="subcellular location">
    <subcellularLocation>
        <location evidence="1">Cytoplasm</location>
    </subcellularLocation>
</comment>
<comment type="similarity">
    <text evidence="1">Belongs to the class I-like SAM-binding methyltransferase superfamily. RsmB/NOP family.</text>
</comment>